<feature type="chain" id="PRO_0000122974" description="dTTP/UTP pyrophosphatase">
    <location>
        <begin position="1"/>
        <end position="189"/>
    </location>
</feature>
<feature type="active site" description="Proton acceptor" evidence="1 8">
    <location>
        <position position="70"/>
    </location>
</feature>
<feature type="site" description="Important for substrate specificity" evidence="1 8">
    <location>
        <position position="13"/>
    </location>
</feature>
<feature type="site" description="Important for substrate specificity" evidence="1 8">
    <location>
        <position position="71"/>
    </location>
</feature>
<feature type="site" description="Important for substrate specificity" evidence="1 8">
    <location>
        <position position="153"/>
    </location>
</feature>
<feature type="disulfide bond">
    <location>
        <begin position="74"/>
        <end position="79"/>
    </location>
</feature>
<feature type="mutagenesis site" description="Loss of activity." evidence="3">
    <original>R</original>
    <variation>A</variation>
    <location>
        <position position="14"/>
    </location>
</feature>
<feature type="mutagenesis site" description="Loss of activity." evidence="3">
    <original>E</original>
    <variation>A</variation>
    <location>
        <position position="34"/>
    </location>
</feature>
<feature type="mutagenesis site" description="Loss of activity." evidence="3">
    <original>K</original>
    <variation>A</variation>
    <location>
        <position position="53"/>
    </location>
</feature>
<feature type="mutagenesis site" description="Loss of activity." evidence="3">
    <original>D</original>
    <variation>A</variation>
    <location>
        <position position="70"/>
    </location>
</feature>
<feature type="mutagenesis site" description="Loss of activity." evidence="3">
    <original>K</original>
    <variation>A</variation>
    <location>
        <position position="82"/>
    </location>
</feature>
<feature type="strand" evidence="12">
    <location>
        <begin position="5"/>
        <end position="7"/>
    </location>
</feature>
<feature type="helix" evidence="12">
    <location>
        <begin position="12"/>
        <end position="19"/>
    </location>
</feature>
<feature type="strand" evidence="13">
    <location>
        <begin position="25"/>
        <end position="27"/>
    </location>
</feature>
<feature type="strand" evidence="13">
    <location>
        <begin position="38"/>
        <end position="40"/>
    </location>
</feature>
<feature type="helix" evidence="12">
    <location>
        <begin position="42"/>
        <end position="60"/>
    </location>
</feature>
<feature type="strand" evidence="12">
    <location>
        <begin position="64"/>
        <end position="75"/>
    </location>
</feature>
<feature type="strand" evidence="12">
    <location>
        <begin position="78"/>
        <end position="80"/>
    </location>
</feature>
<feature type="helix" evidence="12">
    <location>
        <begin position="86"/>
        <end position="96"/>
    </location>
</feature>
<feature type="strand" evidence="12">
    <location>
        <begin position="99"/>
        <end position="111"/>
    </location>
</feature>
<feature type="strand" evidence="12">
    <location>
        <begin position="114"/>
        <end position="126"/>
    </location>
</feature>
<feature type="helix" evidence="12">
    <location>
        <begin position="131"/>
        <end position="138"/>
    </location>
</feature>
<feature type="turn" evidence="12">
    <location>
        <begin position="139"/>
        <end position="141"/>
    </location>
</feature>
<feature type="helix" evidence="12">
    <location>
        <begin position="143"/>
        <end position="145"/>
    </location>
</feature>
<feature type="helix" evidence="12">
    <location>
        <begin position="154"/>
        <end position="158"/>
    </location>
</feature>
<feature type="strand" evidence="12">
    <location>
        <begin position="160"/>
        <end position="165"/>
    </location>
</feature>
<feature type="helix" evidence="12">
    <location>
        <begin position="167"/>
        <end position="171"/>
    </location>
</feature>
<feature type="helix" evidence="12">
    <location>
        <begin position="175"/>
        <end position="182"/>
    </location>
</feature>
<name>NTPPA_BACSU</name>
<accession>Q02169</accession>
<accession>P37576</accession>
<evidence type="ECO:0000255" key="1">
    <source>
        <dbReference type="HAMAP-Rule" id="MF_00528"/>
    </source>
</evidence>
<evidence type="ECO:0000269" key="2">
    <source>
    </source>
</evidence>
<evidence type="ECO:0000269" key="3">
    <source>
    </source>
</evidence>
<evidence type="ECO:0000269" key="4">
    <source>
    </source>
</evidence>
<evidence type="ECO:0000303" key="5">
    <source>
    </source>
</evidence>
<evidence type="ECO:0000303" key="6">
    <source>
    </source>
</evidence>
<evidence type="ECO:0000305" key="7"/>
<evidence type="ECO:0000305" key="8">
    <source>
    </source>
</evidence>
<evidence type="ECO:0007744" key="9">
    <source>
        <dbReference type="PDB" id="1EX2"/>
    </source>
</evidence>
<evidence type="ECO:0007744" key="10">
    <source>
        <dbReference type="PDB" id="1EXC"/>
    </source>
</evidence>
<evidence type="ECO:0007744" key="11">
    <source>
        <dbReference type="PDB" id="4HEB"/>
    </source>
</evidence>
<evidence type="ECO:0007829" key="12">
    <source>
        <dbReference type="PDB" id="1EX2"/>
    </source>
</evidence>
<evidence type="ECO:0007829" key="13">
    <source>
        <dbReference type="PDB" id="1EXC"/>
    </source>
</evidence>
<proteinExistence type="evidence at protein level"/>
<sequence>MTKPLILASQSPRRKELLDLLQLPYSIIVSEVEEKLNRNFSPEENVQWLAKQKAKAVADLHPHAIVIGADTMVCLDGECLGKPQDQEEAASMLRRLSGRSHSVITAVSIQAENHSETFYDKTEVAFWSLSEEEIWTYIETKEPMDKAGAYGIQGRGALFVKKIDGDYYSVMGLPISKTMRALRHFDIRA</sequence>
<keyword id="KW-0002">3D-structure</keyword>
<keyword id="KW-0963">Cytoplasm</keyword>
<keyword id="KW-1015">Disulfide bond</keyword>
<keyword id="KW-0378">Hydrolase</keyword>
<keyword id="KW-0546">Nucleotide metabolism</keyword>
<keyword id="KW-1185">Reference proteome</keyword>
<reference key="1">
    <citation type="journal article" date="1993" name="J. Bacteriol.">
        <title>Amplification of the Bacillus subtilis maf gene results in arrested septum formation.</title>
        <authorList>
            <person name="Butler Y.X."/>
            <person name="Abhayawardhane Y."/>
            <person name="Stewart G.C."/>
        </authorList>
    </citation>
    <scope>NUCLEOTIDE SEQUENCE [GENOMIC DNA]</scope>
    <scope>OVEREXPRESSION</scope>
    <scope>DISRUPTION PHENOTYPE</scope>
    <source>
        <strain>168</strain>
    </source>
</reference>
<reference key="2">
    <citation type="journal article" date="1992" name="J. Bacteriol.">
        <title>Identification of Bacillus subtilis genes for septum placement and shape determination.</title>
        <authorList>
            <person name="Levin P.A."/>
            <person name="Margolis P.S."/>
            <person name="Setlow P."/>
            <person name="Losick R."/>
            <person name="Sun D."/>
        </authorList>
    </citation>
    <scope>NUCLEOTIDE SEQUENCE [GENOMIC DNA]</scope>
</reference>
<reference key="3">
    <citation type="journal article" date="1997" name="Nature">
        <title>The complete genome sequence of the Gram-positive bacterium Bacillus subtilis.</title>
        <authorList>
            <person name="Kunst F."/>
            <person name="Ogasawara N."/>
            <person name="Moszer I."/>
            <person name="Albertini A.M."/>
            <person name="Alloni G."/>
            <person name="Azevedo V."/>
            <person name="Bertero M.G."/>
            <person name="Bessieres P."/>
            <person name="Bolotin A."/>
            <person name="Borchert S."/>
            <person name="Borriss R."/>
            <person name="Boursier L."/>
            <person name="Brans A."/>
            <person name="Braun M."/>
            <person name="Brignell S.C."/>
            <person name="Bron S."/>
            <person name="Brouillet S."/>
            <person name="Bruschi C.V."/>
            <person name="Caldwell B."/>
            <person name="Capuano V."/>
            <person name="Carter N.M."/>
            <person name="Choi S.-K."/>
            <person name="Codani J.-J."/>
            <person name="Connerton I.F."/>
            <person name="Cummings N.J."/>
            <person name="Daniel R.A."/>
            <person name="Denizot F."/>
            <person name="Devine K.M."/>
            <person name="Duesterhoeft A."/>
            <person name="Ehrlich S.D."/>
            <person name="Emmerson P.T."/>
            <person name="Entian K.-D."/>
            <person name="Errington J."/>
            <person name="Fabret C."/>
            <person name="Ferrari E."/>
            <person name="Foulger D."/>
            <person name="Fritz C."/>
            <person name="Fujita M."/>
            <person name="Fujita Y."/>
            <person name="Fuma S."/>
            <person name="Galizzi A."/>
            <person name="Galleron N."/>
            <person name="Ghim S.-Y."/>
            <person name="Glaser P."/>
            <person name="Goffeau A."/>
            <person name="Golightly E.J."/>
            <person name="Grandi G."/>
            <person name="Guiseppi G."/>
            <person name="Guy B.J."/>
            <person name="Haga K."/>
            <person name="Haiech J."/>
            <person name="Harwood C.R."/>
            <person name="Henaut A."/>
            <person name="Hilbert H."/>
            <person name="Holsappel S."/>
            <person name="Hosono S."/>
            <person name="Hullo M.-F."/>
            <person name="Itaya M."/>
            <person name="Jones L.-M."/>
            <person name="Joris B."/>
            <person name="Karamata D."/>
            <person name="Kasahara Y."/>
            <person name="Klaerr-Blanchard M."/>
            <person name="Klein C."/>
            <person name="Kobayashi Y."/>
            <person name="Koetter P."/>
            <person name="Koningstein G."/>
            <person name="Krogh S."/>
            <person name="Kumano M."/>
            <person name="Kurita K."/>
            <person name="Lapidus A."/>
            <person name="Lardinois S."/>
            <person name="Lauber J."/>
            <person name="Lazarevic V."/>
            <person name="Lee S.-M."/>
            <person name="Levine A."/>
            <person name="Liu H."/>
            <person name="Masuda S."/>
            <person name="Mauel C."/>
            <person name="Medigue C."/>
            <person name="Medina N."/>
            <person name="Mellado R.P."/>
            <person name="Mizuno M."/>
            <person name="Moestl D."/>
            <person name="Nakai S."/>
            <person name="Noback M."/>
            <person name="Noone D."/>
            <person name="O'Reilly M."/>
            <person name="Ogawa K."/>
            <person name="Ogiwara A."/>
            <person name="Oudega B."/>
            <person name="Park S.-H."/>
            <person name="Parro V."/>
            <person name="Pohl T.M."/>
            <person name="Portetelle D."/>
            <person name="Porwollik S."/>
            <person name="Prescott A.M."/>
            <person name="Presecan E."/>
            <person name="Pujic P."/>
            <person name="Purnelle B."/>
            <person name="Rapoport G."/>
            <person name="Rey M."/>
            <person name="Reynolds S."/>
            <person name="Rieger M."/>
            <person name="Rivolta C."/>
            <person name="Rocha E."/>
            <person name="Roche B."/>
            <person name="Rose M."/>
            <person name="Sadaie Y."/>
            <person name="Sato T."/>
            <person name="Scanlan E."/>
            <person name="Schleich S."/>
            <person name="Schroeter R."/>
            <person name="Scoffone F."/>
            <person name="Sekiguchi J."/>
            <person name="Sekowska A."/>
            <person name="Seror S.J."/>
            <person name="Serror P."/>
            <person name="Shin B.-S."/>
            <person name="Soldo B."/>
            <person name="Sorokin A."/>
            <person name="Tacconi E."/>
            <person name="Takagi T."/>
            <person name="Takahashi H."/>
            <person name="Takemaru K."/>
            <person name="Takeuchi M."/>
            <person name="Tamakoshi A."/>
            <person name="Tanaka T."/>
            <person name="Terpstra P."/>
            <person name="Tognoni A."/>
            <person name="Tosato V."/>
            <person name="Uchiyama S."/>
            <person name="Vandenbol M."/>
            <person name="Vannier F."/>
            <person name="Vassarotti A."/>
            <person name="Viari A."/>
            <person name="Wambutt R."/>
            <person name="Wedler E."/>
            <person name="Wedler H."/>
            <person name="Weitzenegger T."/>
            <person name="Winters P."/>
            <person name="Wipat A."/>
            <person name="Yamamoto H."/>
            <person name="Yamane K."/>
            <person name="Yasumoto K."/>
            <person name="Yata K."/>
            <person name="Yoshida K."/>
            <person name="Yoshikawa H.-F."/>
            <person name="Zumstein E."/>
            <person name="Yoshikawa H."/>
            <person name="Danchin A."/>
        </authorList>
    </citation>
    <scope>NUCLEOTIDE SEQUENCE [LARGE SCALE GENOMIC DNA]</scope>
    <source>
        <strain>168</strain>
    </source>
</reference>
<reference key="4">
    <citation type="journal article" date="1993" name="J. Bacteriol.">
        <title>Sporulation gene spoIIB from Bacillus subtilis.</title>
        <authorList>
            <person name="Margolis P.S."/>
            <person name="Driks A."/>
            <person name="Losick R."/>
        </authorList>
    </citation>
    <scope>NUCLEOTIDE SEQUENCE [GENOMIC DNA] OF 1-35</scope>
    <source>
        <strain>168 / PY79</strain>
    </source>
</reference>
<reference evidence="9 10" key="5">
    <citation type="journal article" date="2000" name="Proc. Natl. Acad. Sci. U.S.A.">
        <title>Functional implications from crystal structures of the conserved Bacillus subtilis protein Maf with and without dUTP.</title>
        <authorList>
            <person name="Minasov G."/>
            <person name="Teplova M."/>
            <person name="Stewart G.C."/>
            <person name="Koonin E.V."/>
            <person name="Anderson W.F."/>
            <person name="Egli M."/>
        </authorList>
    </citation>
    <scope>X-RAY CRYSTALLOGRAPHY (1.85 ANGSTROMS) OF APOENZYME AND IN COMPLEX WITH DUTP</scope>
    <scope>SUBUNIT</scope>
</reference>
<reference evidence="11" key="6">
    <citation type="journal article" date="2013" name="Chem. Biol.">
        <title>Biochemical and structural studies of conserved Maf proteins revealed nucleotide pyrophosphatases with a preference for modified nucleotides.</title>
        <authorList>
            <person name="Tchigvintsev A."/>
            <person name="Tchigvintsev D."/>
            <person name="Flick R."/>
            <person name="Popovic A."/>
            <person name="Dong A."/>
            <person name="Xu X."/>
            <person name="Brown G."/>
            <person name="Lu W."/>
            <person name="Wu H."/>
            <person name="Cui H."/>
            <person name="Dombrowski L."/>
            <person name="Joo J.C."/>
            <person name="Beloglazova N."/>
            <person name="Min J."/>
            <person name="Savchenko A."/>
            <person name="Caudy A.A."/>
            <person name="Rabinowitz J.D."/>
            <person name="Murzin A.G."/>
            <person name="Yakunin A.F."/>
        </authorList>
    </citation>
    <scope>X-RAY CRYSTALLOGRAPHY (2.26 ANGSTROMS)</scope>
    <scope>FUNCTION</scope>
    <scope>CATALYTIC ACTIVITY</scope>
    <scope>BIOPHYSICOCHEMICAL PROPERTIES</scope>
    <scope>ACTIVE SITE</scope>
    <scope>MUTAGENESIS OF ARG-14; GLU-34; LYS-53; ASP-70 AND LYS-82</scope>
</reference>
<protein>
    <recommendedName>
        <fullName evidence="1 7">dTTP/UTP pyrophosphatase</fullName>
        <shortName evidence="1 7">dTTPase/UTPase</shortName>
        <ecNumber evidence="1 3">3.6.1.9</ecNumber>
    </recommendedName>
    <alternativeName>
        <fullName evidence="6">Multicopy associated filamentation protein</fullName>
    </alternativeName>
    <alternativeName>
        <fullName evidence="1 5">Nucleoside triphosphate pyrophosphatase</fullName>
    </alternativeName>
    <alternativeName>
        <fullName evidence="1 5">Nucleotide pyrophosphatase</fullName>
        <shortName evidence="1 7">Nucleotide PPase</shortName>
    </alternativeName>
    <alternativeName>
        <fullName evidence="7">Septum formation protein Maf</fullName>
    </alternativeName>
</protein>
<comment type="function">
    <text evidence="3">Nucleoside triphosphate pyrophosphatase that hydrolyzes dTTP and UTP. Can also hydrolyze CTP and the modified nucleotides pseudo-UTP, 5-methyl-CTP (m(5)CTP) and 5-methyl-UTP (m(5)UTP) (PubMed:24210219). May have a dual role in cell division arrest and in preventing the incorporation of modified nucleotides into cellular nucleic acids (PubMed:24210219).</text>
</comment>
<comment type="catalytic activity">
    <reaction evidence="1 3">
        <text>dTTP + H2O = dTMP + diphosphate + H(+)</text>
        <dbReference type="Rhea" id="RHEA:28534"/>
        <dbReference type="ChEBI" id="CHEBI:15377"/>
        <dbReference type="ChEBI" id="CHEBI:15378"/>
        <dbReference type="ChEBI" id="CHEBI:33019"/>
        <dbReference type="ChEBI" id="CHEBI:37568"/>
        <dbReference type="ChEBI" id="CHEBI:63528"/>
        <dbReference type="EC" id="3.6.1.9"/>
    </reaction>
</comment>
<comment type="catalytic activity">
    <reaction evidence="1 3">
        <text>UTP + H2O = UMP + diphosphate + H(+)</text>
        <dbReference type="Rhea" id="RHEA:29395"/>
        <dbReference type="ChEBI" id="CHEBI:15377"/>
        <dbReference type="ChEBI" id="CHEBI:15378"/>
        <dbReference type="ChEBI" id="CHEBI:33019"/>
        <dbReference type="ChEBI" id="CHEBI:46398"/>
        <dbReference type="ChEBI" id="CHEBI:57865"/>
        <dbReference type="EC" id="3.6.1.9"/>
    </reaction>
</comment>
<comment type="catalytic activity">
    <reaction evidence="3">
        <text>CTP + H2O = CMP + diphosphate + H(+)</text>
        <dbReference type="Rhea" id="RHEA:27762"/>
        <dbReference type="ChEBI" id="CHEBI:15377"/>
        <dbReference type="ChEBI" id="CHEBI:15378"/>
        <dbReference type="ChEBI" id="CHEBI:33019"/>
        <dbReference type="ChEBI" id="CHEBI:37563"/>
        <dbReference type="ChEBI" id="CHEBI:60377"/>
        <dbReference type="EC" id="3.6.1.9"/>
    </reaction>
</comment>
<comment type="catalytic activity">
    <reaction evidence="3">
        <text>psi-UTP + H2O = psi-UMP + diphosphate + H(+)</text>
        <dbReference type="Rhea" id="RHEA:58740"/>
        <dbReference type="ChEBI" id="CHEBI:15377"/>
        <dbReference type="ChEBI" id="CHEBI:15378"/>
        <dbReference type="ChEBI" id="CHEBI:33019"/>
        <dbReference type="ChEBI" id="CHEBI:58380"/>
        <dbReference type="ChEBI" id="CHEBI:142798"/>
    </reaction>
</comment>
<comment type="catalytic activity">
    <reaction evidence="3">
        <text>5-methyl-CTP + H2O = 5-methyl-CMP + diphosphate + H(+)</text>
        <dbReference type="Rhea" id="RHEA:58732"/>
        <dbReference type="ChEBI" id="CHEBI:15377"/>
        <dbReference type="ChEBI" id="CHEBI:15378"/>
        <dbReference type="ChEBI" id="CHEBI:33019"/>
        <dbReference type="ChEBI" id="CHEBI:142795"/>
        <dbReference type="ChEBI" id="CHEBI:142796"/>
    </reaction>
</comment>
<comment type="catalytic activity">
    <reaction evidence="3">
        <text>5-methyl-UTP + H2O = 5-methyl-UMP + diphosphate + H(+)</text>
        <dbReference type="Rhea" id="RHEA:58736"/>
        <dbReference type="ChEBI" id="CHEBI:15377"/>
        <dbReference type="ChEBI" id="CHEBI:15378"/>
        <dbReference type="ChEBI" id="CHEBI:33019"/>
        <dbReference type="ChEBI" id="CHEBI:63527"/>
        <dbReference type="ChEBI" id="CHEBI:142797"/>
    </reaction>
</comment>
<comment type="cofactor">
    <cofactor evidence="1">
        <name>a divalent metal cation</name>
        <dbReference type="ChEBI" id="CHEBI:60240"/>
    </cofactor>
</comment>
<comment type="biophysicochemical properties">
    <kinetics>
        <KM evidence="3">50.6 uM for dTTP</KM>
        <KM evidence="3">72.4 uM for UTP</KM>
        <KM evidence="3">25 uM for CTP</KM>
        <KM evidence="3">4.7 uM for m(5)UTP</KM>
        <KM evidence="3">7.8 uM for m(5)CTP</KM>
        <KM evidence="3">5.7 uM for pseudo-UTP</KM>
        <text evidence="3">kcat is 11.6 sec(-1) with dTTP as substrate. kcat is 4.9 sec(-1) with UTP as substrate. kcat is 7.1 sec(-1) with CTP as substrate. kcat is 2.4 sec(-1) with m(5)UTP as substrate. kcat is 8.5 sec(-1) with m(5)CTP as substrate. kcat is 7.2 sec(-1) with pseudo-UTP as substrate.</text>
    </kinetics>
</comment>
<comment type="subunit">
    <text evidence="2">Homodimer.</text>
</comment>
<comment type="subcellular location">
    <subcellularLocation>
        <location evidence="1 7">Cytoplasm</location>
    </subcellularLocation>
</comment>
<comment type="disruption phenotype">
    <text evidence="4">Not essential for cell division.</text>
</comment>
<comment type="miscellaneous">
    <text evidence="4">Overexpression results in extensive filamentation caused by a disruption and subsequent inhibition of the septation process.</text>
</comment>
<comment type="similarity">
    <text evidence="1 8">Belongs to the Maf family. YhdE subfamily.</text>
</comment>
<gene>
    <name evidence="6" type="primary">maf</name>
    <name type="ordered locus">BSU28050</name>
</gene>
<organism>
    <name type="scientific">Bacillus subtilis (strain 168)</name>
    <dbReference type="NCBI Taxonomy" id="224308"/>
    <lineage>
        <taxon>Bacteria</taxon>
        <taxon>Bacillati</taxon>
        <taxon>Bacillota</taxon>
        <taxon>Bacilli</taxon>
        <taxon>Bacillales</taxon>
        <taxon>Bacillaceae</taxon>
        <taxon>Bacillus</taxon>
    </lineage>
</organism>
<dbReference type="EC" id="3.6.1.9" evidence="1 3"/>
<dbReference type="EMBL" id="L08793">
    <property type="protein sequence ID" value="AAA22582.1"/>
    <property type="molecule type" value="Genomic_DNA"/>
</dbReference>
<dbReference type="EMBL" id="M96343">
    <property type="protein sequence ID" value="AAA22395.1"/>
    <property type="molecule type" value="Genomic_DNA"/>
</dbReference>
<dbReference type="EMBL" id="AL009126">
    <property type="protein sequence ID" value="CAB14765.1"/>
    <property type="molecule type" value="Genomic_DNA"/>
</dbReference>
<dbReference type="EMBL" id="L04519">
    <property type="protein sequence ID" value="AAB59027.1"/>
    <property type="molecule type" value="Genomic_DNA"/>
</dbReference>
<dbReference type="PIR" id="A45239">
    <property type="entry name" value="A45239"/>
</dbReference>
<dbReference type="RefSeq" id="NP_390683.1">
    <property type="nucleotide sequence ID" value="NC_000964.3"/>
</dbReference>
<dbReference type="RefSeq" id="WP_004398496.1">
    <property type="nucleotide sequence ID" value="NZ_OZ025638.1"/>
</dbReference>
<dbReference type="PDB" id="1EX2">
    <property type="method" value="X-ray"/>
    <property type="resolution" value="1.85 A"/>
    <property type="chains" value="A/B=1-189"/>
</dbReference>
<dbReference type="PDB" id="1EXC">
    <property type="method" value="X-ray"/>
    <property type="resolution" value="2.70 A"/>
    <property type="chains" value="A/B=1-189"/>
</dbReference>
<dbReference type="PDB" id="4HEB">
    <property type="method" value="X-ray"/>
    <property type="resolution" value="2.26 A"/>
    <property type="chains" value="A/B=1-189"/>
</dbReference>
<dbReference type="PDBsum" id="1EX2"/>
<dbReference type="PDBsum" id="1EXC"/>
<dbReference type="PDBsum" id="4HEB"/>
<dbReference type="SMR" id="Q02169"/>
<dbReference type="FunCoup" id="Q02169">
    <property type="interactions" value="562"/>
</dbReference>
<dbReference type="STRING" id="224308.BSU28050"/>
<dbReference type="DrugBank" id="DB02333">
    <property type="generic name" value="Deoxyuridine-5'-Triphosphate"/>
</dbReference>
<dbReference type="PaxDb" id="224308-BSU28050"/>
<dbReference type="DNASU" id="936605"/>
<dbReference type="EnsemblBacteria" id="CAB14765">
    <property type="protein sequence ID" value="CAB14765"/>
    <property type="gene ID" value="BSU_28050"/>
</dbReference>
<dbReference type="GeneID" id="936605"/>
<dbReference type="KEGG" id="bsu:BSU28050"/>
<dbReference type="PATRIC" id="fig|224308.179.peg.3047"/>
<dbReference type="eggNOG" id="COG0424">
    <property type="taxonomic scope" value="Bacteria"/>
</dbReference>
<dbReference type="InParanoid" id="Q02169"/>
<dbReference type="OrthoDB" id="9807767at2"/>
<dbReference type="PhylomeDB" id="Q02169"/>
<dbReference type="BioCyc" id="BSUB:BSU28050-MONOMER"/>
<dbReference type="EvolutionaryTrace" id="Q02169"/>
<dbReference type="Proteomes" id="UP000001570">
    <property type="component" value="Chromosome"/>
</dbReference>
<dbReference type="GO" id="GO:0005737">
    <property type="term" value="C:cytoplasm"/>
    <property type="evidence" value="ECO:0007669"/>
    <property type="project" value="UniProtKB-SubCell"/>
</dbReference>
<dbReference type="GO" id="GO:0036218">
    <property type="term" value="F:dTTP diphosphatase activity"/>
    <property type="evidence" value="ECO:0007669"/>
    <property type="project" value="RHEA"/>
</dbReference>
<dbReference type="GO" id="GO:0047429">
    <property type="term" value="F:nucleoside triphosphate diphosphatase activity"/>
    <property type="evidence" value="ECO:0000318"/>
    <property type="project" value="GO_Central"/>
</dbReference>
<dbReference type="GO" id="GO:0036221">
    <property type="term" value="F:UTP diphosphatase activity"/>
    <property type="evidence" value="ECO:0007669"/>
    <property type="project" value="RHEA"/>
</dbReference>
<dbReference type="GO" id="GO:0009117">
    <property type="term" value="P:nucleotide metabolic process"/>
    <property type="evidence" value="ECO:0007669"/>
    <property type="project" value="UniProtKB-KW"/>
</dbReference>
<dbReference type="CDD" id="cd00555">
    <property type="entry name" value="Maf"/>
    <property type="match status" value="1"/>
</dbReference>
<dbReference type="FunFam" id="3.90.950.10:FF:000005">
    <property type="entry name" value="7-methyl-GTP pyrophosphatase"/>
    <property type="match status" value="1"/>
</dbReference>
<dbReference type="Gene3D" id="3.90.950.10">
    <property type="match status" value="1"/>
</dbReference>
<dbReference type="HAMAP" id="MF_00528">
    <property type="entry name" value="Maf"/>
    <property type="match status" value="1"/>
</dbReference>
<dbReference type="InterPro" id="IPR029001">
    <property type="entry name" value="ITPase-like_fam"/>
</dbReference>
<dbReference type="InterPro" id="IPR003697">
    <property type="entry name" value="Maf-like"/>
</dbReference>
<dbReference type="NCBIfam" id="TIGR00172">
    <property type="entry name" value="maf"/>
    <property type="match status" value="1"/>
</dbReference>
<dbReference type="PANTHER" id="PTHR43213">
    <property type="entry name" value="BIFUNCTIONAL DTTP/UTP PYROPHOSPHATASE/METHYLTRANSFERASE PROTEIN-RELATED"/>
    <property type="match status" value="1"/>
</dbReference>
<dbReference type="PANTHER" id="PTHR43213:SF5">
    <property type="entry name" value="BIFUNCTIONAL DTTP_UTP PYROPHOSPHATASE_METHYLTRANSFERASE PROTEIN-RELATED"/>
    <property type="match status" value="1"/>
</dbReference>
<dbReference type="Pfam" id="PF02545">
    <property type="entry name" value="Maf"/>
    <property type="match status" value="1"/>
</dbReference>
<dbReference type="PIRSF" id="PIRSF006305">
    <property type="entry name" value="Maf"/>
    <property type="match status" value="1"/>
</dbReference>
<dbReference type="SUPFAM" id="SSF52972">
    <property type="entry name" value="ITPase-like"/>
    <property type="match status" value="1"/>
</dbReference>